<dbReference type="EMBL" id="OR128471">
    <property type="protein sequence ID" value="WMI02509.1"/>
    <property type="molecule type" value="mRNA"/>
</dbReference>
<dbReference type="GO" id="GO:0005576">
    <property type="term" value="C:extracellular region"/>
    <property type="evidence" value="ECO:0007669"/>
    <property type="project" value="UniProtKB-SubCell"/>
</dbReference>
<dbReference type="GO" id="GO:0090729">
    <property type="term" value="F:toxin activity"/>
    <property type="evidence" value="ECO:0007669"/>
    <property type="project" value="UniProtKB-KW"/>
</dbReference>
<keyword id="KW-0027">Amidation</keyword>
<keyword id="KW-0528">Neurotoxin</keyword>
<keyword id="KW-0964">Secreted</keyword>
<keyword id="KW-0732">Signal</keyword>
<keyword id="KW-0800">Toxin</keyword>
<comment type="function">
    <text evidence="1">Toxin that causes a rapid and irreversible paralysis when intrathoracically injected into insects (blowflies). Does not cause spontaneous nocifensive behaviors by intraplantar injection in mice.</text>
</comment>
<comment type="subcellular location">
    <subcellularLocation>
        <location evidence="5">Secreted</location>
    </subcellularLocation>
</comment>
<comment type="tissue specificity">
    <text evidence="5">Expressed by the venom gland.</text>
</comment>
<comment type="similarity">
    <text evidence="4">Belongs to the formicidae venom clade 2 family.</text>
</comment>
<name>TX4C_POGRU</name>
<reference key="1">
    <citation type="journal article" date="2024" name="J. Biol. Chem.">
        <title>Peptide toxins that target vertebrate voltage-gated sodium channels underly the painful stings of harvester ants.</title>
        <authorList>
            <person name="Robinson S.D."/>
            <person name="Deuis J.R."/>
            <person name="Niu P."/>
            <person name="Touchard A."/>
            <person name="Mueller A."/>
            <person name="Schendel V."/>
            <person name="Brinkwirth N."/>
            <person name="King G.F."/>
            <person name="Vetter I."/>
            <person name="Schmidt J.O."/>
        </authorList>
    </citation>
    <scope>NUCLEOTIDE SEQUENCE [MRNA]</scope>
    <source>
        <tissue>Venom gland</tissue>
    </source>
</reference>
<proteinExistence type="inferred from homology"/>
<protein>
    <recommendedName>
        <fullName evidence="3">Myrmicitoxin(1)-Pr4c</fullName>
        <shortName evidence="3">MYRTX(1)-Pr4c</shortName>
    </recommendedName>
</protein>
<evidence type="ECO:0000250" key="1">
    <source>
        <dbReference type="UniProtKB" id="P0DRD4"/>
    </source>
</evidence>
<evidence type="ECO:0000255" key="2"/>
<evidence type="ECO:0000303" key="3">
    <source>
    </source>
</evidence>
<evidence type="ECO:0000305" key="4"/>
<evidence type="ECO:0000305" key="5">
    <source>
    </source>
</evidence>
<feature type="signal peptide" evidence="2">
    <location>
        <begin position="1"/>
        <end position="23"/>
    </location>
</feature>
<feature type="propeptide" id="PRO_0000461261" evidence="5">
    <location>
        <begin position="24"/>
        <end position="33"/>
    </location>
</feature>
<feature type="peptide" id="PRO_0000461262" description="Myrmicitoxin(1)-Pr4c" evidence="1">
    <location>
        <begin position="34"/>
        <end position="59"/>
    </location>
</feature>
<feature type="modified residue" description="Glutamine amide" evidence="1">
    <location>
        <position position="59"/>
    </location>
</feature>
<organism>
    <name type="scientific">Pogonomyrmex rugosus</name>
    <name type="common">Desert harvester ant</name>
    <dbReference type="NCBI Taxonomy" id="144042"/>
    <lineage>
        <taxon>Eukaryota</taxon>
        <taxon>Metazoa</taxon>
        <taxon>Ecdysozoa</taxon>
        <taxon>Arthropoda</taxon>
        <taxon>Hexapoda</taxon>
        <taxon>Insecta</taxon>
        <taxon>Pterygota</taxon>
        <taxon>Neoptera</taxon>
        <taxon>Endopterygota</taxon>
        <taxon>Hymenoptera</taxon>
        <taxon>Apocrita</taxon>
        <taxon>Aculeata</taxon>
        <taxon>Formicoidea</taxon>
        <taxon>Formicidae</taxon>
        <taxon>Myrmicinae</taxon>
        <taxon>Pogonomyrmex</taxon>
    </lineage>
</organism>
<accession>P0DXU0</accession>
<sequence>MKAIIFLFAVLTVVAIIIPIISGEPNAGPHAASIDLNEIMKKITPDLLKMLDDIKTKIQG</sequence>